<dbReference type="EC" id="1.2.1.70" evidence="1"/>
<dbReference type="EMBL" id="CP000453">
    <property type="protein sequence ID" value="ABI55634.1"/>
    <property type="molecule type" value="Genomic_DNA"/>
</dbReference>
<dbReference type="RefSeq" id="WP_011628030.1">
    <property type="nucleotide sequence ID" value="NC_008340.1"/>
</dbReference>
<dbReference type="SMR" id="Q0AC03"/>
<dbReference type="KEGG" id="aeh:Mlg_0279"/>
<dbReference type="eggNOG" id="COG0373">
    <property type="taxonomic scope" value="Bacteria"/>
</dbReference>
<dbReference type="HOGENOM" id="CLU_035113_2_2_6"/>
<dbReference type="OrthoDB" id="110209at2"/>
<dbReference type="UniPathway" id="UPA00251">
    <property type="reaction ID" value="UER00316"/>
</dbReference>
<dbReference type="Proteomes" id="UP000001962">
    <property type="component" value="Chromosome"/>
</dbReference>
<dbReference type="GO" id="GO:0008883">
    <property type="term" value="F:glutamyl-tRNA reductase activity"/>
    <property type="evidence" value="ECO:0007669"/>
    <property type="project" value="UniProtKB-UniRule"/>
</dbReference>
<dbReference type="GO" id="GO:0050661">
    <property type="term" value="F:NADP binding"/>
    <property type="evidence" value="ECO:0007669"/>
    <property type="project" value="InterPro"/>
</dbReference>
<dbReference type="GO" id="GO:0019353">
    <property type="term" value="P:protoporphyrinogen IX biosynthetic process from glutamate"/>
    <property type="evidence" value="ECO:0007669"/>
    <property type="project" value="TreeGrafter"/>
</dbReference>
<dbReference type="CDD" id="cd05213">
    <property type="entry name" value="NAD_bind_Glutamyl_tRNA_reduct"/>
    <property type="match status" value="1"/>
</dbReference>
<dbReference type="FunFam" id="3.30.460.30:FF:000001">
    <property type="entry name" value="Glutamyl-tRNA reductase"/>
    <property type="match status" value="1"/>
</dbReference>
<dbReference type="FunFam" id="3.40.50.720:FF:000031">
    <property type="entry name" value="Glutamyl-tRNA reductase"/>
    <property type="match status" value="1"/>
</dbReference>
<dbReference type="Gene3D" id="3.30.460.30">
    <property type="entry name" value="Glutamyl-tRNA reductase, N-terminal domain"/>
    <property type="match status" value="1"/>
</dbReference>
<dbReference type="Gene3D" id="3.40.50.720">
    <property type="entry name" value="NAD(P)-binding Rossmann-like Domain"/>
    <property type="match status" value="1"/>
</dbReference>
<dbReference type="HAMAP" id="MF_00087">
    <property type="entry name" value="Glu_tRNA_reductase"/>
    <property type="match status" value="1"/>
</dbReference>
<dbReference type="InterPro" id="IPR000343">
    <property type="entry name" value="4pyrrol_synth_GluRdtase"/>
</dbReference>
<dbReference type="InterPro" id="IPR015896">
    <property type="entry name" value="4pyrrol_synth_GluRdtase_dimer"/>
</dbReference>
<dbReference type="InterPro" id="IPR015895">
    <property type="entry name" value="4pyrrol_synth_GluRdtase_N"/>
</dbReference>
<dbReference type="InterPro" id="IPR036453">
    <property type="entry name" value="GluRdtase_dimer_dom_sf"/>
</dbReference>
<dbReference type="InterPro" id="IPR036343">
    <property type="entry name" value="GluRdtase_N_sf"/>
</dbReference>
<dbReference type="InterPro" id="IPR036291">
    <property type="entry name" value="NAD(P)-bd_dom_sf"/>
</dbReference>
<dbReference type="InterPro" id="IPR006151">
    <property type="entry name" value="Shikm_DH/Glu-tRNA_Rdtase"/>
</dbReference>
<dbReference type="NCBIfam" id="TIGR01035">
    <property type="entry name" value="hemA"/>
    <property type="match status" value="1"/>
</dbReference>
<dbReference type="PANTHER" id="PTHR43013">
    <property type="entry name" value="GLUTAMYL-TRNA REDUCTASE"/>
    <property type="match status" value="1"/>
</dbReference>
<dbReference type="PANTHER" id="PTHR43013:SF1">
    <property type="entry name" value="GLUTAMYL-TRNA REDUCTASE"/>
    <property type="match status" value="1"/>
</dbReference>
<dbReference type="Pfam" id="PF00745">
    <property type="entry name" value="GlutR_dimer"/>
    <property type="match status" value="1"/>
</dbReference>
<dbReference type="Pfam" id="PF05201">
    <property type="entry name" value="GlutR_N"/>
    <property type="match status" value="1"/>
</dbReference>
<dbReference type="Pfam" id="PF01488">
    <property type="entry name" value="Shikimate_DH"/>
    <property type="match status" value="1"/>
</dbReference>
<dbReference type="PIRSF" id="PIRSF000445">
    <property type="entry name" value="4pyrrol_synth_GluRdtase"/>
    <property type="match status" value="1"/>
</dbReference>
<dbReference type="SUPFAM" id="SSF69742">
    <property type="entry name" value="Glutamyl tRNA-reductase catalytic, N-terminal domain"/>
    <property type="match status" value="1"/>
</dbReference>
<dbReference type="SUPFAM" id="SSF69075">
    <property type="entry name" value="Glutamyl tRNA-reductase dimerization domain"/>
    <property type="match status" value="1"/>
</dbReference>
<dbReference type="SUPFAM" id="SSF51735">
    <property type="entry name" value="NAD(P)-binding Rossmann-fold domains"/>
    <property type="match status" value="1"/>
</dbReference>
<organism>
    <name type="scientific">Alkalilimnicola ehrlichii (strain ATCC BAA-1101 / DSM 17681 / MLHE-1)</name>
    <dbReference type="NCBI Taxonomy" id="187272"/>
    <lineage>
        <taxon>Bacteria</taxon>
        <taxon>Pseudomonadati</taxon>
        <taxon>Pseudomonadota</taxon>
        <taxon>Gammaproteobacteria</taxon>
        <taxon>Chromatiales</taxon>
        <taxon>Ectothiorhodospiraceae</taxon>
        <taxon>Alkalilimnicola</taxon>
    </lineage>
</organism>
<sequence length="446" mass="49827">MSLFALGLNHKSAPVNIREQIVFAPDAVTAALQHLRAHTTAREAAILSTCNRTELYVRMDDRAPEMLGEWLARYHRLDPEWLRDYLYLHEGAGAVRHLMRVSAGLDSLVLGEPQILGQAKIAYQGAIDAGTMGRVLDRLFQHAFSVAKQVRTDTGIGANPVSVAFAAVTLARQIFDDFQNRTALLIGAGETIELVARHLREQGLKNLIVANRNLERARQLVELEGGEAIPLSEIPTRLPEADVLVASTASPLPILGKGTVERAVRKRRHRPMFMLDLAVPRDIEPEAGNLDDVYLYTVDDLREVIAENRRSREEAAHQAEEIVQRQVDQFLSWRRAQQAVASICDFRERGHAHARELLQRANRRLRCGEPPERVLAWLSHTLTNRLLHAPTVGLREAAEAGDRERIELARTLLQIENANEDTRESVDKEQTGTTQGAARGDQRSTG</sequence>
<gene>
    <name evidence="1" type="primary">hemA</name>
    <name type="ordered locus">Mlg_0279</name>
</gene>
<accession>Q0AC03</accession>
<proteinExistence type="inferred from homology"/>
<comment type="function">
    <text evidence="1">Catalyzes the NADPH-dependent reduction of glutamyl-tRNA(Glu) to glutamate 1-semialdehyde (GSA).</text>
</comment>
<comment type="catalytic activity">
    <reaction evidence="1">
        <text>(S)-4-amino-5-oxopentanoate + tRNA(Glu) + NADP(+) = L-glutamyl-tRNA(Glu) + NADPH + H(+)</text>
        <dbReference type="Rhea" id="RHEA:12344"/>
        <dbReference type="Rhea" id="RHEA-COMP:9663"/>
        <dbReference type="Rhea" id="RHEA-COMP:9680"/>
        <dbReference type="ChEBI" id="CHEBI:15378"/>
        <dbReference type="ChEBI" id="CHEBI:57501"/>
        <dbReference type="ChEBI" id="CHEBI:57783"/>
        <dbReference type="ChEBI" id="CHEBI:58349"/>
        <dbReference type="ChEBI" id="CHEBI:78442"/>
        <dbReference type="ChEBI" id="CHEBI:78520"/>
        <dbReference type="EC" id="1.2.1.70"/>
    </reaction>
</comment>
<comment type="pathway">
    <text evidence="1">Porphyrin-containing compound metabolism; protoporphyrin-IX biosynthesis; 5-aminolevulinate from L-glutamyl-tRNA(Glu): step 1/2.</text>
</comment>
<comment type="subunit">
    <text evidence="1">Homodimer.</text>
</comment>
<comment type="domain">
    <text evidence="1">Possesses an unusual extended V-shaped dimeric structure with each monomer consisting of three distinct domains arranged along a curved 'spinal' alpha-helix. The N-terminal catalytic domain specifically recognizes the glutamate moiety of the substrate. The second domain is the NADPH-binding domain, and the third C-terminal domain is responsible for dimerization.</text>
</comment>
<comment type="miscellaneous">
    <text evidence="1">During catalysis, the active site Cys acts as a nucleophile attacking the alpha-carbonyl group of tRNA-bound glutamate with the formation of a thioester intermediate between enzyme and glutamate, and the concomitant release of tRNA(Glu). The thioester intermediate is finally reduced by direct hydride transfer from NADPH, to form the product GSA.</text>
</comment>
<comment type="similarity">
    <text evidence="1">Belongs to the glutamyl-tRNA reductase family.</text>
</comment>
<reference key="1">
    <citation type="submission" date="2006-08" db="EMBL/GenBank/DDBJ databases">
        <title>Complete sequence of Alkalilimnicola ehrilichei MLHE-1.</title>
        <authorList>
            <person name="Copeland A."/>
            <person name="Lucas S."/>
            <person name="Lapidus A."/>
            <person name="Barry K."/>
            <person name="Detter J.C."/>
            <person name="Glavina del Rio T."/>
            <person name="Hammon N."/>
            <person name="Israni S."/>
            <person name="Dalin E."/>
            <person name="Tice H."/>
            <person name="Pitluck S."/>
            <person name="Sims D."/>
            <person name="Brettin T."/>
            <person name="Bruce D."/>
            <person name="Han C."/>
            <person name="Tapia R."/>
            <person name="Gilna P."/>
            <person name="Schmutz J."/>
            <person name="Larimer F."/>
            <person name="Land M."/>
            <person name="Hauser L."/>
            <person name="Kyrpides N."/>
            <person name="Mikhailova N."/>
            <person name="Oremland R.S."/>
            <person name="Hoeft S.E."/>
            <person name="Switzer-Blum J."/>
            <person name="Kulp T."/>
            <person name="King G."/>
            <person name="Tabita R."/>
            <person name="Witte B."/>
            <person name="Santini J.M."/>
            <person name="Basu P."/>
            <person name="Hollibaugh J.T."/>
            <person name="Xie G."/>
            <person name="Stolz J.F."/>
            <person name="Richardson P."/>
        </authorList>
    </citation>
    <scope>NUCLEOTIDE SEQUENCE [LARGE SCALE GENOMIC DNA]</scope>
    <source>
        <strain>ATCC BAA-1101 / DSM 17681 / MLHE-1</strain>
    </source>
</reference>
<name>HEM1_ALKEH</name>
<feature type="chain" id="PRO_1000004591" description="Glutamyl-tRNA reductase">
    <location>
        <begin position="1"/>
        <end position="446"/>
    </location>
</feature>
<feature type="region of interest" description="Disordered" evidence="2">
    <location>
        <begin position="417"/>
        <end position="446"/>
    </location>
</feature>
<feature type="compositionally biased region" description="Basic and acidic residues" evidence="2">
    <location>
        <begin position="420"/>
        <end position="430"/>
    </location>
</feature>
<feature type="active site" description="Nucleophile" evidence="1">
    <location>
        <position position="50"/>
    </location>
</feature>
<feature type="binding site" evidence="1">
    <location>
        <begin position="49"/>
        <end position="52"/>
    </location>
    <ligand>
        <name>substrate</name>
    </ligand>
</feature>
<feature type="binding site" evidence="1">
    <location>
        <position position="107"/>
    </location>
    <ligand>
        <name>substrate</name>
    </ligand>
</feature>
<feature type="binding site" evidence="1">
    <location>
        <begin position="112"/>
        <end position="114"/>
    </location>
    <ligand>
        <name>substrate</name>
    </ligand>
</feature>
<feature type="binding site" evidence="1">
    <location>
        <position position="118"/>
    </location>
    <ligand>
        <name>substrate</name>
    </ligand>
</feature>
<feature type="binding site" evidence="1">
    <location>
        <begin position="187"/>
        <end position="192"/>
    </location>
    <ligand>
        <name>NADP(+)</name>
        <dbReference type="ChEBI" id="CHEBI:58349"/>
    </ligand>
</feature>
<feature type="site" description="Important for activity" evidence="1">
    <location>
        <position position="97"/>
    </location>
</feature>
<evidence type="ECO:0000255" key="1">
    <source>
        <dbReference type="HAMAP-Rule" id="MF_00087"/>
    </source>
</evidence>
<evidence type="ECO:0000256" key="2">
    <source>
        <dbReference type="SAM" id="MobiDB-lite"/>
    </source>
</evidence>
<protein>
    <recommendedName>
        <fullName evidence="1">Glutamyl-tRNA reductase</fullName>
        <shortName evidence="1">GluTR</shortName>
        <ecNumber evidence="1">1.2.1.70</ecNumber>
    </recommendedName>
</protein>
<keyword id="KW-0521">NADP</keyword>
<keyword id="KW-0560">Oxidoreductase</keyword>
<keyword id="KW-0627">Porphyrin biosynthesis</keyword>
<keyword id="KW-1185">Reference proteome</keyword>